<protein>
    <recommendedName>
        <fullName evidence="1">Putative manganese efflux pump MntP 1</fullName>
    </recommendedName>
</protein>
<organism>
    <name type="scientific">Clostridium botulinum (strain Hall / ATCC 3502 / NCTC 13319 / Type A)</name>
    <dbReference type="NCBI Taxonomy" id="441771"/>
    <lineage>
        <taxon>Bacteria</taxon>
        <taxon>Bacillati</taxon>
        <taxon>Bacillota</taxon>
        <taxon>Clostridia</taxon>
        <taxon>Eubacteriales</taxon>
        <taxon>Clostridiaceae</taxon>
        <taxon>Clostridium</taxon>
    </lineage>
</organism>
<dbReference type="EMBL" id="AM412317">
    <property type="protein sequence ID" value="CAL81947.1"/>
    <property type="molecule type" value="Genomic_DNA"/>
</dbReference>
<dbReference type="RefSeq" id="YP_001252938.1">
    <property type="nucleotide sequence ID" value="NC_009495.1"/>
</dbReference>
<dbReference type="SMR" id="A5HYT8"/>
<dbReference type="GeneID" id="5184649"/>
<dbReference type="KEGG" id="cbo:CBO0394"/>
<dbReference type="PATRIC" id="fig|413999.7.peg.398"/>
<dbReference type="HOGENOM" id="CLU_096410_3_0_9"/>
<dbReference type="Proteomes" id="UP000001986">
    <property type="component" value="Chromosome"/>
</dbReference>
<dbReference type="GO" id="GO:0005886">
    <property type="term" value="C:plasma membrane"/>
    <property type="evidence" value="ECO:0000318"/>
    <property type="project" value="GO_Central"/>
</dbReference>
<dbReference type="GO" id="GO:0005384">
    <property type="term" value="F:manganese ion transmembrane transporter activity"/>
    <property type="evidence" value="ECO:0000318"/>
    <property type="project" value="GO_Central"/>
</dbReference>
<dbReference type="GO" id="GO:0030026">
    <property type="term" value="P:intracellular manganese ion homeostasis"/>
    <property type="evidence" value="ECO:0000318"/>
    <property type="project" value="GO_Central"/>
</dbReference>
<dbReference type="GO" id="GO:0140048">
    <property type="term" value="P:manganese ion export across plasma membrane"/>
    <property type="evidence" value="ECO:0000318"/>
    <property type="project" value="GO_Central"/>
</dbReference>
<dbReference type="HAMAP" id="MF_01521">
    <property type="entry name" value="MntP_pump"/>
    <property type="match status" value="1"/>
</dbReference>
<dbReference type="InterPro" id="IPR003810">
    <property type="entry name" value="Mntp/YtaF"/>
</dbReference>
<dbReference type="InterPro" id="IPR022929">
    <property type="entry name" value="Put_MntP"/>
</dbReference>
<dbReference type="PANTHER" id="PTHR35529">
    <property type="entry name" value="MANGANESE EFFLUX PUMP MNTP-RELATED"/>
    <property type="match status" value="1"/>
</dbReference>
<dbReference type="PANTHER" id="PTHR35529:SF1">
    <property type="entry name" value="MANGANESE EFFLUX PUMP MNTP-RELATED"/>
    <property type="match status" value="1"/>
</dbReference>
<dbReference type="Pfam" id="PF02659">
    <property type="entry name" value="Mntp"/>
    <property type="match status" value="1"/>
</dbReference>
<feature type="chain" id="PRO_0000315562" description="Putative manganese efflux pump MntP 1">
    <location>
        <begin position="1"/>
        <end position="183"/>
    </location>
</feature>
<feature type="transmembrane region" description="Helical" evidence="1">
    <location>
        <begin position="6"/>
        <end position="26"/>
    </location>
</feature>
<feature type="transmembrane region" description="Helical" evidence="1">
    <location>
        <begin position="36"/>
        <end position="56"/>
    </location>
</feature>
<feature type="transmembrane region" description="Helical" evidence="1">
    <location>
        <begin position="64"/>
        <end position="84"/>
    </location>
</feature>
<feature type="transmembrane region" description="Helical" evidence="1">
    <location>
        <begin position="100"/>
        <end position="120"/>
    </location>
</feature>
<feature type="transmembrane region" description="Helical" evidence="1">
    <location>
        <begin position="130"/>
        <end position="150"/>
    </location>
</feature>
<feature type="transmembrane region" description="Helical" evidence="1">
    <location>
        <begin position="158"/>
        <end position="178"/>
    </location>
</feature>
<gene>
    <name evidence="1" type="primary">mntP1</name>
    <name type="ordered locus">CBO0394</name>
</gene>
<accession>A5HYT8</accession>
<keyword id="KW-1003">Cell membrane</keyword>
<keyword id="KW-0406">Ion transport</keyword>
<keyword id="KW-0464">Manganese</keyword>
<keyword id="KW-0472">Membrane</keyword>
<keyword id="KW-1185">Reference proteome</keyword>
<keyword id="KW-0812">Transmembrane</keyword>
<keyword id="KW-1133">Transmembrane helix</keyword>
<keyword id="KW-0813">Transport</keyword>
<sequence>MEVQELFLLALAISLDAFGVILCIGINKGITLKSSMIFVFSFGFFQFFLSFLGGYIGTIFNKYIVPIPTIVGGLIIIIVGILMITEGFKEKEESIFLNKIMYLILGVSVSIDALVIGFTTLSYINNLFYLFMSSLFMGLIATIICSLGIILSKYIKKISIISSYADYIGGIILILFGLKMLFF</sequence>
<name>MNTP1_CLOBH</name>
<reference key="1">
    <citation type="journal article" date="2007" name="Genome Res.">
        <title>Genome sequence of a proteolytic (Group I) Clostridium botulinum strain Hall A and comparative analysis of the clostridial genomes.</title>
        <authorList>
            <person name="Sebaihia M."/>
            <person name="Peck M.W."/>
            <person name="Minton N.P."/>
            <person name="Thomson N.R."/>
            <person name="Holden M.T.G."/>
            <person name="Mitchell W.J."/>
            <person name="Carter A.T."/>
            <person name="Bentley S.D."/>
            <person name="Mason D.R."/>
            <person name="Crossman L."/>
            <person name="Paul C.J."/>
            <person name="Ivens A."/>
            <person name="Wells-Bennik M.H.J."/>
            <person name="Davis I.J."/>
            <person name="Cerdeno-Tarraga A.M."/>
            <person name="Churcher C."/>
            <person name="Quail M.A."/>
            <person name="Chillingworth T."/>
            <person name="Feltwell T."/>
            <person name="Fraser A."/>
            <person name="Goodhead I."/>
            <person name="Hance Z."/>
            <person name="Jagels K."/>
            <person name="Larke N."/>
            <person name="Maddison M."/>
            <person name="Moule S."/>
            <person name="Mungall K."/>
            <person name="Norbertczak H."/>
            <person name="Rabbinowitsch E."/>
            <person name="Sanders M."/>
            <person name="Simmonds M."/>
            <person name="White B."/>
            <person name="Whithead S."/>
            <person name="Parkhill J."/>
        </authorList>
    </citation>
    <scope>NUCLEOTIDE SEQUENCE [LARGE SCALE GENOMIC DNA]</scope>
    <source>
        <strain>Hall / ATCC 3502 / NCTC 13319 / Type A</strain>
    </source>
</reference>
<proteinExistence type="inferred from homology"/>
<comment type="function">
    <text evidence="1">Probably functions as a manganese efflux pump.</text>
</comment>
<comment type="subcellular location">
    <subcellularLocation>
        <location evidence="1">Cell membrane</location>
        <topology evidence="1">Multi-pass membrane protein</topology>
    </subcellularLocation>
</comment>
<comment type="similarity">
    <text evidence="1">Belongs to the MntP (TC 9.B.29) family.</text>
</comment>
<evidence type="ECO:0000255" key="1">
    <source>
        <dbReference type="HAMAP-Rule" id="MF_01521"/>
    </source>
</evidence>